<sequence length="407" mass="47484">MNKSQGSVSFTDVTVDFTQEEWEQLDPSQRILYMDVMLENYSNLLSVEVWKADDQMERDHRNPDEQARQFLILKNQTPIEERGDLFGRALNLNTDFVSLRQVPYKYDLYEKTLKYNSDLLNSNRSYAGKQTDECNEFGKALLYLKQEKTHGGVEYSEYNKGGKALSHKAAIFKHQKIKNLVQPFICTYCDKAFSFKSLLISHKRIHTGEKPYECNVCKKTFSHKANLIKHQRIHTGEKPFECPECGKAFTHQSNLIVHQRAHMEKKPYECSECGKTFAQKFELTTHQRIHTGERPYECNECAKTFFKKSNLIIHQKIHTGEKRYECSECGKSFIQNSQLIIHMRTHTGEKPYECTECGKTFSQRSTLRLHLRIHTGEKPYECSECGKAFSRKSRLSVHQRVHIGEKP</sequence>
<proteinExistence type="evidence at transcript level"/>
<keyword id="KW-0238">DNA-binding</keyword>
<keyword id="KW-1017">Isopeptide bond</keyword>
<keyword id="KW-0479">Metal-binding</keyword>
<keyword id="KW-0539">Nucleus</keyword>
<keyword id="KW-1185">Reference proteome</keyword>
<keyword id="KW-0677">Repeat</keyword>
<keyword id="KW-0804">Transcription</keyword>
<keyword id="KW-0805">Transcription regulation</keyword>
<keyword id="KW-0832">Ubl conjugation</keyword>
<keyword id="KW-0862">Zinc</keyword>
<keyword id="KW-0863">Zinc-finger</keyword>
<evidence type="ECO:0000250" key="1">
    <source>
        <dbReference type="UniProtKB" id="P08042"/>
    </source>
</evidence>
<evidence type="ECO:0000250" key="2">
    <source>
        <dbReference type="UniProtKB" id="Q6P2D0"/>
    </source>
</evidence>
<evidence type="ECO:0000255" key="3">
    <source>
        <dbReference type="PROSITE-ProRule" id="PRU00042"/>
    </source>
</evidence>
<evidence type="ECO:0000255" key="4">
    <source>
        <dbReference type="PROSITE-ProRule" id="PRU00119"/>
    </source>
</evidence>
<evidence type="ECO:0000305" key="5"/>
<gene>
    <name type="primary">ZFP1</name>
</gene>
<name>ZFP1_PONAB</name>
<protein>
    <recommendedName>
        <fullName>Zinc finger protein 1 homolog</fullName>
        <shortName>Zfp-1</shortName>
    </recommendedName>
</protein>
<feature type="chain" id="PRO_0000047281" description="Zinc finger protein 1 homolog">
    <location>
        <begin position="1"/>
        <end position="407"/>
    </location>
</feature>
<feature type="domain" description="KRAB" evidence="4">
    <location>
        <begin position="8"/>
        <end position="83"/>
    </location>
</feature>
<feature type="zinc finger region" description="C2H2-type 1" evidence="3">
    <location>
        <begin position="184"/>
        <end position="206"/>
    </location>
</feature>
<feature type="zinc finger region" description="C2H2-type 2" evidence="3">
    <location>
        <begin position="212"/>
        <end position="234"/>
    </location>
</feature>
<feature type="zinc finger region" description="C2H2-type 3" evidence="3">
    <location>
        <begin position="240"/>
        <end position="262"/>
    </location>
</feature>
<feature type="zinc finger region" description="C2H2-type 4" evidence="3">
    <location>
        <begin position="268"/>
        <end position="290"/>
    </location>
</feature>
<feature type="zinc finger region" description="C2H2-type 5" evidence="3">
    <location>
        <begin position="296"/>
        <end position="318"/>
    </location>
</feature>
<feature type="zinc finger region" description="C2H2-type 6" evidence="3">
    <location>
        <begin position="324"/>
        <end position="346"/>
    </location>
</feature>
<feature type="zinc finger region" description="C2H2-type 7" evidence="3">
    <location>
        <begin position="352"/>
        <end position="374"/>
    </location>
</feature>
<feature type="zinc finger region" description="C2H2-type 8" evidence="3">
    <location>
        <begin position="380"/>
        <end position="402"/>
    </location>
</feature>
<feature type="region of interest" description="Required for correct nuclear localization and exclusion from the nucleoli" evidence="1">
    <location>
        <begin position="2"/>
        <end position="167"/>
    </location>
</feature>
<feature type="region of interest" description="Does not affect nuclear localization pattern" evidence="1">
    <location>
        <begin position="171"/>
        <end position="404"/>
    </location>
</feature>
<feature type="cross-link" description="Glycyl lysine isopeptide (Lys-Gly) (interchain with G-Cter in SUMO2)" evidence="2">
    <location>
        <position position="74"/>
    </location>
</feature>
<feature type="cross-link" description="Glycyl lysine isopeptide (Lys-Gly) (interchain with G-Cter in SUMO2)" evidence="2">
    <location>
        <position position="114"/>
    </location>
</feature>
<feature type="cross-link" description="Glycyl lysine isopeptide (Lys-Gly) (interchain with G-Cter in SUMO2)" evidence="2">
    <location>
        <position position="145"/>
    </location>
</feature>
<accession>Q5RC79</accession>
<comment type="function">
    <text>May be involved in transcriptional regulation.</text>
</comment>
<comment type="subcellular location">
    <subcellularLocation>
        <location evidence="1">Nucleus</location>
    </subcellularLocation>
    <text evidence="1">Shows widespread expression throughout the nucleus, but appears to be excluded from nucleoli.</text>
</comment>
<comment type="similarity">
    <text evidence="5">Belongs to the krueppel C2H2-type zinc-finger protein family.</text>
</comment>
<dbReference type="EMBL" id="CR858401">
    <property type="protein sequence ID" value="CAH90628.1"/>
    <property type="molecule type" value="mRNA"/>
</dbReference>
<dbReference type="RefSeq" id="NP_001125340.1">
    <property type="nucleotide sequence ID" value="NM_001131868.1"/>
</dbReference>
<dbReference type="SMR" id="Q5RC79"/>
<dbReference type="STRING" id="9601.ENSPPYP00000008529"/>
<dbReference type="GeneID" id="100172242"/>
<dbReference type="KEGG" id="pon:100172242"/>
<dbReference type="CTD" id="162239"/>
<dbReference type="eggNOG" id="KOG1721">
    <property type="taxonomic scope" value="Eukaryota"/>
</dbReference>
<dbReference type="InParanoid" id="Q5RC79"/>
<dbReference type="OrthoDB" id="6077919at2759"/>
<dbReference type="Proteomes" id="UP000001595">
    <property type="component" value="Unplaced"/>
</dbReference>
<dbReference type="GO" id="GO:0005634">
    <property type="term" value="C:nucleus"/>
    <property type="evidence" value="ECO:0007669"/>
    <property type="project" value="UniProtKB-SubCell"/>
</dbReference>
<dbReference type="GO" id="GO:0000981">
    <property type="term" value="F:DNA-binding transcription factor activity, RNA polymerase II-specific"/>
    <property type="evidence" value="ECO:0007669"/>
    <property type="project" value="TreeGrafter"/>
</dbReference>
<dbReference type="GO" id="GO:0000977">
    <property type="term" value="F:RNA polymerase II transcription regulatory region sequence-specific DNA binding"/>
    <property type="evidence" value="ECO:0007669"/>
    <property type="project" value="TreeGrafter"/>
</dbReference>
<dbReference type="GO" id="GO:0008270">
    <property type="term" value="F:zinc ion binding"/>
    <property type="evidence" value="ECO:0007669"/>
    <property type="project" value="UniProtKB-KW"/>
</dbReference>
<dbReference type="CDD" id="cd07765">
    <property type="entry name" value="KRAB_A-box"/>
    <property type="match status" value="1"/>
</dbReference>
<dbReference type="FunFam" id="3.30.160.60:FF:000555">
    <property type="entry name" value="Zinc finger protein 1 homolog"/>
    <property type="match status" value="1"/>
</dbReference>
<dbReference type="FunFam" id="3.30.160.60:FF:000907">
    <property type="entry name" value="Zinc finger protein 1 homolog"/>
    <property type="match status" value="1"/>
</dbReference>
<dbReference type="FunFam" id="3.30.160.60:FF:000139">
    <property type="entry name" value="zinc finger protein 1 homolog"/>
    <property type="match status" value="1"/>
</dbReference>
<dbReference type="FunFam" id="3.30.160.60:FF:000295">
    <property type="entry name" value="zinc finger protein 19"/>
    <property type="match status" value="2"/>
</dbReference>
<dbReference type="FunFam" id="3.30.160.60:FF:000688">
    <property type="entry name" value="zinc finger protein 197 isoform X1"/>
    <property type="match status" value="1"/>
</dbReference>
<dbReference type="FunFam" id="3.30.160.60:FF:002343">
    <property type="entry name" value="Zinc finger protein 33A"/>
    <property type="match status" value="1"/>
</dbReference>
<dbReference type="FunFam" id="3.30.160.60:FF:002090">
    <property type="entry name" value="Zinc finger protein 473"/>
    <property type="match status" value="1"/>
</dbReference>
<dbReference type="Gene3D" id="6.10.140.140">
    <property type="match status" value="1"/>
</dbReference>
<dbReference type="Gene3D" id="3.30.160.60">
    <property type="entry name" value="Classic Zinc Finger"/>
    <property type="match status" value="8"/>
</dbReference>
<dbReference type="InterPro" id="IPR001909">
    <property type="entry name" value="KRAB"/>
</dbReference>
<dbReference type="InterPro" id="IPR036051">
    <property type="entry name" value="KRAB_dom_sf"/>
</dbReference>
<dbReference type="InterPro" id="IPR036236">
    <property type="entry name" value="Znf_C2H2_sf"/>
</dbReference>
<dbReference type="InterPro" id="IPR013087">
    <property type="entry name" value="Znf_C2H2_type"/>
</dbReference>
<dbReference type="PANTHER" id="PTHR24381">
    <property type="entry name" value="ZINC FINGER PROTEIN"/>
    <property type="match status" value="1"/>
</dbReference>
<dbReference type="PANTHER" id="PTHR24381:SF390">
    <property type="entry name" value="ZINC FINGER PROTEIN 37 HOMOLOG"/>
    <property type="match status" value="1"/>
</dbReference>
<dbReference type="Pfam" id="PF01352">
    <property type="entry name" value="KRAB"/>
    <property type="match status" value="1"/>
</dbReference>
<dbReference type="Pfam" id="PF00096">
    <property type="entry name" value="zf-C2H2"/>
    <property type="match status" value="8"/>
</dbReference>
<dbReference type="SMART" id="SM00349">
    <property type="entry name" value="KRAB"/>
    <property type="match status" value="1"/>
</dbReference>
<dbReference type="SMART" id="SM00355">
    <property type="entry name" value="ZnF_C2H2"/>
    <property type="match status" value="8"/>
</dbReference>
<dbReference type="SUPFAM" id="SSF57667">
    <property type="entry name" value="beta-beta-alpha zinc fingers"/>
    <property type="match status" value="5"/>
</dbReference>
<dbReference type="SUPFAM" id="SSF109640">
    <property type="entry name" value="KRAB domain (Kruppel-associated box)"/>
    <property type="match status" value="1"/>
</dbReference>
<dbReference type="PROSITE" id="PS50805">
    <property type="entry name" value="KRAB"/>
    <property type="match status" value="1"/>
</dbReference>
<dbReference type="PROSITE" id="PS00028">
    <property type="entry name" value="ZINC_FINGER_C2H2_1"/>
    <property type="match status" value="8"/>
</dbReference>
<dbReference type="PROSITE" id="PS50157">
    <property type="entry name" value="ZINC_FINGER_C2H2_2"/>
    <property type="match status" value="8"/>
</dbReference>
<organism>
    <name type="scientific">Pongo abelii</name>
    <name type="common">Sumatran orangutan</name>
    <name type="synonym">Pongo pygmaeus abelii</name>
    <dbReference type="NCBI Taxonomy" id="9601"/>
    <lineage>
        <taxon>Eukaryota</taxon>
        <taxon>Metazoa</taxon>
        <taxon>Chordata</taxon>
        <taxon>Craniata</taxon>
        <taxon>Vertebrata</taxon>
        <taxon>Euteleostomi</taxon>
        <taxon>Mammalia</taxon>
        <taxon>Eutheria</taxon>
        <taxon>Euarchontoglires</taxon>
        <taxon>Primates</taxon>
        <taxon>Haplorrhini</taxon>
        <taxon>Catarrhini</taxon>
        <taxon>Hominidae</taxon>
        <taxon>Pongo</taxon>
    </lineage>
</organism>
<reference key="1">
    <citation type="submission" date="2004-11" db="EMBL/GenBank/DDBJ databases">
        <authorList>
            <consortium name="The German cDNA consortium"/>
        </authorList>
    </citation>
    <scope>NUCLEOTIDE SEQUENCE [LARGE SCALE MRNA]</scope>
    <source>
        <tissue>Brain cortex</tissue>
    </source>
</reference>